<feature type="signal peptide" evidence="9 11">
    <location>
        <begin position="1"/>
        <end position="23"/>
    </location>
</feature>
<feature type="chain" id="PRO_0000031707" description="sn-glycerol-3-phosphate-binding periplasmic protein UgpB">
    <location>
        <begin position="24"/>
        <end position="438"/>
    </location>
</feature>
<feature type="binding site" evidence="3 12">
    <location>
        <position position="65"/>
    </location>
    <ligand>
        <name>sn-glycerol 3-phosphate</name>
        <dbReference type="ChEBI" id="CHEBI:57597"/>
    </ligand>
</feature>
<feature type="binding site" evidence="3 12">
    <location>
        <position position="89"/>
    </location>
    <ligand>
        <name>sn-glycerol 3-phosphate</name>
        <dbReference type="ChEBI" id="CHEBI:57597"/>
    </ligand>
</feature>
<feature type="binding site" evidence="3 12">
    <location>
        <position position="144"/>
    </location>
    <ligand>
        <name>sn-glycerol 3-phosphate</name>
        <dbReference type="ChEBI" id="CHEBI:57597"/>
    </ligand>
</feature>
<feature type="binding site" evidence="3 12">
    <location>
        <position position="270"/>
    </location>
    <ligand>
        <name>sn-glycerol 3-phosphate</name>
        <dbReference type="ChEBI" id="CHEBI:57597"/>
    </ligand>
</feature>
<feature type="binding site" evidence="3 12">
    <location>
        <position position="307"/>
    </location>
    <ligand>
        <name>sn-glycerol 3-phosphate</name>
        <dbReference type="ChEBI" id="CHEBI:57597"/>
    </ligand>
</feature>
<feature type="binding site" evidence="3 12">
    <location>
        <position position="346"/>
    </location>
    <ligand>
        <name>sn-glycerol 3-phosphate</name>
        <dbReference type="ChEBI" id="CHEBI:57597"/>
    </ligand>
</feature>
<feature type="binding site" evidence="3 12">
    <location>
        <position position="397"/>
    </location>
    <ligand>
        <name>sn-glycerol 3-phosphate</name>
        <dbReference type="ChEBI" id="CHEBI:57597"/>
    </ligand>
</feature>
<feature type="mutagenesis site" description="Constitutively active as a chaperone. Not affected by G3P." evidence="5">
    <original>E</original>
    <variation>A</variation>
    <location>
        <position position="89"/>
    </location>
</feature>
<feature type="mutagenesis site" description="Cannot bind G3P. Fails to stimulate ATPase activity of the complex." evidence="3">
    <original>W</original>
    <variation>H</variation>
    <location>
        <position position="192"/>
    </location>
</feature>
<feature type="mutagenesis site" description="Cannot bind G3P. Fails to stimulate ATPase activity of the complex. Constitutively active as a chaperone, independently of the presence or absence of G3P. Exhibit lower anti-aggregation activity." evidence="3 5">
    <original>W</original>
    <variation>S</variation>
    <location>
        <position position="192"/>
    </location>
</feature>
<feature type="mutagenesis site" description="Slight increase in the dissociation constant of G3P." evidence="3">
    <original>W</original>
    <variation>H</variation>
    <location>
        <position position="195"/>
    </location>
</feature>
<feature type="mutagenesis site" description="Strong increase in the dissociation constant of G3P. Fails to stimulate ATPase activity of the complex." evidence="3">
    <original>W</original>
    <variation>S</variation>
    <location>
        <position position="195"/>
    </location>
</feature>
<feature type="mutagenesis site" description="Constitutively active as a chaperone. Not affected by G3P." evidence="5">
    <original>R</original>
    <variation>V</variation>
    <location>
        <position position="397"/>
    </location>
</feature>
<feature type="sequence conflict" description="In Ref. 1; CAA31531." evidence="8" ref="1">
    <original>P</original>
    <variation>T</variation>
    <location>
        <position position="334"/>
    </location>
</feature>
<feature type="strand" evidence="15">
    <location>
        <begin position="25"/>
        <end position="31"/>
    </location>
</feature>
<feature type="helix" evidence="15">
    <location>
        <begin position="35"/>
        <end position="51"/>
    </location>
</feature>
<feature type="strand" evidence="15">
    <location>
        <begin position="55"/>
        <end position="61"/>
    </location>
</feature>
<feature type="helix" evidence="15">
    <location>
        <begin position="65"/>
        <end position="77"/>
    </location>
</feature>
<feature type="strand" evidence="15">
    <location>
        <begin position="83"/>
        <end position="88"/>
    </location>
</feature>
<feature type="helix" evidence="15">
    <location>
        <begin position="89"/>
        <end position="91"/>
    </location>
</feature>
<feature type="helix" evidence="15">
    <location>
        <begin position="92"/>
        <end position="97"/>
    </location>
</feature>
<feature type="helix" evidence="15">
    <location>
        <begin position="104"/>
        <end position="111"/>
    </location>
</feature>
<feature type="helix" evidence="15">
    <location>
        <begin position="117"/>
        <end position="119"/>
    </location>
</feature>
<feature type="helix" evidence="15">
    <location>
        <begin position="122"/>
        <end position="125"/>
    </location>
</feature>
<feature type="helix" evidence="15">
    <location>
        <begin position="126"/>
        <end position="128"/>
    </location>
</feature>
<feature type="turn" evidence="15">
    <location>
        <begin position="131"/>
        <end position="133"/>
    </location>
</feature>
<feature type="strand" evidence="15">
    <location>
        <begin position="136"/>
        <end position="144"/>
    </location>
</feature>
<feature type="strand" evidence="15">
    <location>
        <begin position="146"/>
        <end position="151"/>
    </location>
</feature>
<feature type="helix" evidence="15">
    <location>
        <begin position="152"/>
        <end position="157"/>
    </location>
</feature>
<feature type="helix" evidence="15">
    <location>
        <begin position="169"/>
        <end position="181"/>
    </location>
</feature>
<feature type="strand" evidence="15">
    <location>
        <begin position="185"/>
        <end position="192"/>
    </location>
</feature>
<feature type="helix" evidence="15">
    <location>
        <begin position="194"/>
        <end position="204"/>
    </location>
</feature>
<feature type="helix" evidence="15">
    <location>
        <begin position="211"/>
        <end position="214"/>
    </location>
</feature>
<feature type="turn" evidence="15">
    <location>
        <begin position="215"/>
        <end position="217"/>
    </location>
</feature>
<feature type="helix" evidence="15">
    <location>
        <begin position="228"/>
        <end position="242"/>
    </location>
</feature>
<feature type="strand" evidence="15">
    <location>
        <begin position="245"/>
        <end position="249"/>
    </location>
</feature>
<feature type="strand" evidence="14">
    <location>
        <begin position="251"/>
        <end position="253"/>
    </location>
</feature>
<feature type="helix" evidence="15">
    <location>
        <begin position="254"/>
        <end position="260"/>
    </location>
</feature>
<feature type="strand" evidence="15">
    <location>
        <begin position="263"/>
        <end position="270"/>
    </location>
</feature>
<feature type="helix" evidence="15">
    <location>
        <begin position="271"/>
        <end position="273"/>
    </location>
</feature>
<feature type="helix" evidence="15">
    <location>
        <begin position="274"/>
        <end position="280"/>
    </location>
</feature>
<feature type="strand" evidence="15">
    <location>
        <begin position="285"/>
        <end position="288"/>
    </location>
</feature>
<feature type="strand" evidence="15">
    <location>
        <begin position="306"/>
        <end position="315"/>
    </location>
</feature>
<feature type="helix" evidence="15">
    <location>
        <begin position="318"/>
        <end position="332"/>
    </location>
</feature>
<feature type="helix" evidence="15">
    <location>
        <begin position="334"/>
        <end position="344"/>
    </location>
</feature>
<feature type="helix" evidence="15">
    <location>
        <begin position="351"/>
        <end position="359"/>
    </location>
</feature>
<feature type="helix" evidence="15">
    <location>
        <begin position="362"/>
        <end position="365"/>
    </location>
</feature>
<feature type="turn" evidence="15">
    <location>
        <begin position="367"/>
        <end position="370"/>
    </location>
</feature>
<feature type="helix" evidence="15">
    <location>
        <begin position="371"/>
        <end position="376"/>
    </location>
</feature>
<feature type="helix" evidence="15">
    <location>
        <begin position="393"/>
        <end position="408"/>
    </location>
</feature>
<feature type="helix" evidence="15">
    <location>
        <begin position="414"/>
        <end position="435"/>
    </location>
</feature>
<proteinExistence type="evidence at protein level"/>
<gene>
    <name evidence="6" type="primary">ugpB</name>
    <name type="ordered locus">b3453</name>
    <name type="ordered locus">JW3418</name>
</gene>
<organism>
    <name type="scientific">Escherichia coli (strain K12)</name>
    <dbReference type="NCBI Taxonomy" id="83333"/>
    <lineage>
        <taxon>Bacteria</taxon>
        <taxon>Pseudomonadati</taxon>
        <taxon>Pseudomonadota</taxon>
        <taxon>Gammaproteobacteria</taxon>
        <taxon>Enterobacterales</taxon>
        <taxon>Enterobacteriaceae</taxon>
        <taxon>Escherichia</taxon>
    </lineage>
</organism>
<protein>
    <recommendedName>
        <fullName evidence="8">sn-glycerol-3-phosphate-binding periplasmic protein UgpB</fullName>
    </recommendedName>
    <alternativeName>
        <fullName evidence="7">Bile-responsive chaperone</fullName>
    </alternativeName>
</protein>
<accession>P0AG80</accession>
<accession>P10904</accession>
<accession>Q2M7B6</accession>
<name>UGPB_ECOLI</name>
<dbReference type="EMBL" id="X13141">
    <property type="protein sequence ID" value="CAA31531.1"/>
    <property type="molecule type" value="Genomic_DNA"/>
</dbReference>
<dbReference type="EMBL" id="U00039">
    <property type="protein sequence ID" value="AAB18428.1"/>
    <property type="molecule type" value="Genomic_DNA"/>
</dbReference>
<dbReference type="EMBL" id="U00096">
    <property type="protein sequence ID" value="AAC76478.1"/>
    <property type="molecule type" value="Genomic_DNA"/>
</dbReference>
<dbReference type="EMBL" id="AP009048">
    <property type="protein sequence ID" value="BAE77840.1"/>
    <property type="molecule type" value="Genomic_DNA"/>
</dbReference>
<dbReference type="PIR" id="S47672">
    <property type="entry name" value="JGECGP"/>
</dbReference>
<dbReference type="RefSeq" id="NP_417910.1">
    <property type="nucleotide sequence ID" value="NC_000913.3"/>
</dbReference>
<dbReference type="RefSeq" id="WP_000803190.1">
    <property type="nucleotide sequence ID" value="NZ_SSZK01000008.1"/>
</dbReference>
<dbReference type="PDB" id="4AQ4">
    <property type="method" value="X-ray"/>
    <property type="resolution" value="1.80 A"/>
    <property type="chains" value="A=24-438"/>
</dbReference>
<dbReference type="PDB" id="6X84">
    <property type="method" value="X-ray"/>
    <property type="resolution" value="1.25 A"/>
    <property type="chains" value="A/B=24-438"/>
</dbReference>
<dbReference type="PDBsum" id="4AQ4"/>
<dbReference type="PDBsum" id="6X84"/>
<dbReference type="SMR" id="P0AG80"/>
<dbReference type="BioGRID" id="4261118">
    <property type="interactions" value="204"/>
</dbReference>
<dbReference type="ComplexPortal" id="CPX-2150">
    <property type="entry name" value="sn-glycerol-3-phosphate ABC transporter complex"/>
</dbReference>
<dbReference type="DIP" id="DIP-35942N"/>
<dbReference type="FunCoup" id="P0AG80">
    <property type="interactions" value="416"/>
</dbReference>
<dbReference type="IntAct" id="P0AG80">
    <property type="interactions" value="16"/>
</dbReference>
<dbReference type="STRING" id="511145.b3453"/>
<dbReference type="TCDB" id="3.A.1.1.3">
    <property type="family name" value="the atp-binding cassette (abc) superfamily"/>
</dbReference>
<dbReference type="jPOST" id="P0AG80"/>
<dbReference type="PaxDb" id="511145-b3453"/>
<dbReference type="EnsemblBacteria" id="AAC76478">
    <property type="protein sequence ID" value="AAC76478"/>
    <property type="gene ID" value="b3453"/>
</dbReference>
<dbReference type="GeneID" id="75059967"/>
<dbReference type="GeneID" id="947962"/>
<dbReference type="KEGG" id="ecj:JW3418"/>
<dbReference type="KEGG" id="eco:b3453"/>
<dbReference type="KEGG" id="ecoc:C3026_18700"/>
<dbReference type="PATRIC" id="fig|1411691.4.peg.3274"/>
<dbReference type="EchoBASE" id="EB1040"/>
<dbReference type="eggNOG" id="COG1653">
    <property type="taxonomic scope" value="Bacteria"/>
</dbReference>
<dbReference type="HOGENOM" id="CLU_031285_3_0_6"/>
<dbReference type="InParanoid" id="P0AG80"/>
<dbReference type="OMA" id="EIQWWHS"/>
<dbReference type="OrthoDB" id="4393730at2"/>
<dbReference type="PhylomeDB" id="P0AG80"/>
<dbReference type="BioCyc" id="EcoCyc:UGPB-MONOMER"/>
<dbReference type="BioCyc" id="MetaCyc:UGPB-MONOMER"/>
<dbReference type="BRENDA" id="7.6.2.10">
    <property type="organism ID" value="2026"/>
</dbReference>
<dbReference type="EvolutionaryTrace" id="P0AG80"/>
<dbReference type="PRO" id="PR:P0AG80"/>
<dbReference type="Proteomes" id="UP000000625">
    <property type="component" value="Chromosome"/>
</dbReference>
<dbReference type="GO" id="GO:1902517">
    <property type="term" value="C:glycerol-3-phosphate-transporting ATPase complex"/>
    <property type="evidence" value="ECO:0000353"/>
    <property type="project" value="ComplexPortal"/>
</dbReference>
<dbReference type="GO" id="GO:0016020">
    <property type="term" value="C:membrane"/>
    <property type="evidence" value="ECO:0000314"/>
    <property type="project" value="ComplexPortal"/>
</dbReference>
<dbReference type="GO" id="GO:0030288">
    <property type="term" value="C:outer membrane-bounded periplasmic space"/>
    <property type="evidence" value="ECO:0000314"/>
    <property type="project" value="EcoCyc"/>
</dbReference>
<dbReference type="GO" id="GO:0015794">
    <property type="term" value="P:glycerol-3-phosphate transmembrane transport"/>
    <property type="evidence" value="ECO:0000314"/>
    <property type="project" value="ComplexPortal"/>
</dbReference>
<dbReference type="GO" id="GO:0001407">
    <property type="term" value="P:glycerophosphodiester transmembrane transport"/>
    <property type="evidence" value="ECO:0000314"/>
    <property type="project" value="EcoCyc"/>
</dbReference>
<dbReference type="CDD" id="cd14748">
    <property type="entry name" value="PBP2_UgpB"/>
    <property type="match status" value="1"/>
</dbReference>
<dbReference type="Gene3D" id="3.40.190.10">
    <property type="entry name" value="Periplasmic binding protein-like II"/>
    <property type="match status" value="2"/>
</dbReference>
<dbReference type="InterPro" id="IPR050490">
    <property type="entry name" value="Bact_solute-bd_prot1"/>
</dbReference>
<dbReference type="InterPro" id="IPR006059">
    <property type="entry name" value="SBP"/>
</dbReference>
<dbReference type="InterPro" id="IPR006061">
    <property type="entry name" value="SBP_1_CS"/>
</dbReference>
<dbReference type="NCBIfam" id="NF008211">
    <property type="entry name" value="PRK10974.1"/>
    <property type="match status" value="1"/>
</dbReference>
<dbReference type="PANTHER" id="PTHR43649">
    <property type="entry name" value="ARABINOSE-BINDING PROTEIN-RELATED"/>
    <property type="match status" value="1"/>
</dbReference>
<dbReference type="PANTHER" id="PTHR43649:SF31">
    <property type="entry name" value="SN-GLYCEROL-3-PHOSPHATE-BINDING PERIPLASMIC PROTEIN UGPB"/>
    <property type="match status" value="1"/>
</dbReference>
<dbReference type="Pfam" id="PF13416">
    <property type="entry name" value="SBP_bac_8"/>
    <property type="match status" value="1"/>
</dbReference>
<dbReference type="SUPFAM" id="SSF53850">
    <property type="entry name" value="Periplasmic binding protein-like II"/>
    <property type="match status" value="1"/>
</dbReference>
<dbReference type="PROSITE" id="PS01037">
    <property type="entry name" value="SBP_BACTERIAL_1"/>
    <property type="match status" value="1"/>
</dbReference>
<evidence type="ECO:0000269" key="1">
    <source>
    </source>
</evidence>
<evidence type="ECO:0000269" key="2">
    <source>
    </source>
</evidence>
<evidence type="ECO:0000269" key="3">
    <source>
    </source>
</evidence>
<evidence type="ECO:0000269" key="4">
    <source>
    </source>
</evidence>
<evidence type="ECO:0000269" key="5">
    <source>
    </source>
</evidence>
<evidence type="ECO:0000303" key="6">
    <source>
    </source>
</evidence>
<evidence type="ECO:0000303" key="7">
    <source>
    </source>
</evidence>
<evidence type="ECO:0000305" key="8"/>
<evidence type="ECO:0000305" key="9">
    <source>
    </source>
</evidence>
<evidence type="ECO:0000305" key="10">
    <source>
    </source>
</evidence>
<evidence type="ECO:0000305" key="11">
    <source>
    </source>
</evidence>
<evidence type="ECO:0007744" key="12">
    <source>
        <dbReference type="PDB" id="4AQ4"/>
    </source>
</evidence>
<evidence type="ECO:0007744" key="13">
    <source>
        <dbReference type="PDB" id="6X84"/>
    </source>
</evidence>
<evidence type="ECO:0007829" key="14">
    <source>
        <dbReference type="PDB" id="4AQ4"/>
    </source>
</evidence>
<evidence type="ECO:0007829" key="15">
    <source>
        <dbReference type="PDB" id="6X84"/>
    </source>
</evidence>
<comment type="function">
    <text evidence="1 3 4">Part of the ABC transporter complex UgpBAEC involved in sn-glycerol-3-phosphate (G3P) import (PubMed:23013274, PubMed:2842304). Can also transport glycerophosphoryl diesters, which are hydrolyzed to G3P and alcohol during transport (PubMed:2842304). The G3P moiety can be detected in the cytoplasm whereas the corresponding alcohol is usually found in the culture medium (PubMed:2842304). Binds G3P and glycerophosphocholine, but not glycerol-2-phosphate (PubMed:23013274). It was proposed by Yang et al that the complex could also transport glycerol-2-phosphate (G2P) in vivo, but as it was shown later by Wuttge et al that UgpB does not bind G2P, this transport activity is questioned (PubMed:19429609, PubMed:23013274). G2P might be converted in the periplasm to G3P before its transport (PubMed:23013274).</text>
</comment>
<comment type="function">
    <text evidence="5">In the absence of G3P, UgpB can serve as a potent molecular chaperone that exhibits anti-aggregation activity against bile salt-induced protein aggregation (PubMed:32882062). The substrate G3P, which is known to accumulate in the later compartments of the digestive system, triggers a functional switch between UgpB's activity as a molecular chaperone and its activity as a G3P transporter (PubMed:32882062). Chaperone and G3P binding activities are likely mutually exclusive activities (PubMed:32882062).</text>
</comment>
<comment type="activity regulation">
    <text evidence="5">The chaperone activity is activated by the transition from pH 2 to 7 and inhibited by the addition of G3P.</text>
</comment>
<comment type="subunit">
    <text evidence="3 10">The complex is composed of two ATP-binding proteins (UgpC), two transmembrane proteins (UgpA and UgpE) and a solute-binding protein (UgpB).</text>
</comment>
<comment type="subcellular location">
    <subcellularLocation>
        <location evidence="5">Periplasm</location>
    </subcellularLocation>
</comment>
<comment type="induction">
    <text evidence="2">Induced by phosphate starvation, via PhoB (PubMed:1987150). Also induced by carbon starvation, via the cAMP receptor protein (CRP) (PubMed:1987150).</text>
</comment>
<comment type="disruption phenotype">
    <text evidence="1">Mutant lacking this gene fails to grow on both glycerol-3-phosphate and glycerol-2-phosphate.</text>
</comment>
<comment type="similarity">
    <text evidence="8">Belongs to the bacterial solute-binding protein 1 family.</text>
</comment>
<sequence>MKPLHYTASALALGLALMGNAQAVTTIPFWHSMEGELGKEVDSLAQRFNAENPDYKIVPTYKGNYEQNLSAGIAAFRTGNAPAILQVYEVGTATMMASKAIKPVYDVFKEAGIQFDESQFVPTVSGYYSDSKTGHLLSQPFNSSTPVLYYNKDAFKKAGLDPEQPPKTWQDLADYAAKLKASGMKCGYASGWQGWIQLENFSAWNGLPFASKNNGFDGTDAVLEFNKPEQVKHIAMLEEMNKKGDFSYVGRKDESTEKFYNGDCAMTTASSGSLANIREYAKFNYGVGMMPYDADAKDAPQNAIIGGASLWVMQGKDKETYTGVAKFLDFLAKPENAAEWHQKTGYLPITKAAYDLTREQGFYEKNPGADTATRQMLNKPPLPFTKGLRLGNMPQIRVIVDEELESVWTGKKTPQQALDTAVERGNQLLRRFEKSTKS</sequence>
<keyword id="KW-0002">3D-structure</keyword>
<keyword id="KW-0143">Chaperone</keyword>
<keyword id="KW-0574">Periplasm</keyword>
<keyword id="KW-1185">Reference proteome</keyword>
<keyword id="KW-0732">Signal</keyword>
<keyword id="KW-0813">Transport</keyword>
<reference key="1">
    <citation type="journal article" date="1988" name="Mol. Microbiol.">
        <title>Nucleotide sequence of the ugp genes of Escherichia coli K-12: homology to the maltose system.</title>
        <authorList>
            <person name="Overduin P."/>
            <person name="Boos W."/>
            <person name="Tommassen J."/>
        </authorList>
    </citation>
    <scope>NUCLEOTIDE SEQUENCE [GENOMIC DNA]</scope>
    <source>
        <strain>K12</strain>
    </source>
</reference>
<reference key="2">
    <citation type="journal article" date="1994" name="Nucleic Acids Res.">
        <title>Analysis of the Escherichia coli genome. V. DNA sequence of the region from 76.0 to 81.5 minutes.</title>
        <authorList>
            <person name="Sofia H.J."/>
            <person name="Burland V."/>
            <person name="Daniels D.L."/>
            <person name="Plunkett G. III"/>
            <person name="Blattner F.R."/>
        </authorList>
    </citation>
    <scope>NUCLEOTIDE SEQUENCE [LARGE SCALE GENOMIC DNA]</scope>
    <source>
        <strain>K12 / MG1655 / ATCC 47076</strain>
    </source>
</reference>
<reference key="3">
    <citation type="journal article" date="1997" name="Science">
        <title>The complete genome sequence of Escherichia coli K-12.</title>
        <authorList>
            <person name="Blattner F.R."/>
            <person name="Plunkett G. III"/>
            <person name="Bloch C.A."/>
            <person name="Perna N.T."/>
            <person name="Burland V."/>
            <person name="Riley M."/>
            <person name="Collado-Vides J."/>
            <person name="Glasner J.D."/>
            <person name="Rode C.K."/>
            <person name="Mayhew G.F."/>
            <person name="Gregor J."/>
            <person name="Davis N.W."/>
            <person name="Kirkpatrick H.A."/>
            <person name="Goeden M.A."/>
            <person name="Rose D.J."/>
            <person name="Mau B."/>
            <person name="Shao Y."/>
        </authorList>
    </citation>
    <scope>NUCLEOTIDE SEQUENCE [LARGE SCALE GENOMIC DNA]</scope>
    <source>
        <strain>K12 / MG1655 / ATCC 47076</strain>
    </source>
</reference>
<reference key="4">
    <citation type="journal article" date="2006" name="Mol. Syst. Biol.">
        <title>Highly accurate genome sequences of Escherichia coli K-12 strains MG1655 and W3110.</title>
        <authorList>
            <person name="Hayashi K."/>
            <person name="Morooka N."/>
            <person name="Yamamoto Y."/>
            <person name="Fujita K."/>
            <person name="Isono K."/>
            <person name="Choi S."/>
            <person name="Ohtsubo E."/>
            <person name="Baba T."/>
            <person name="Wanner B.L."/>
            <person name="Mori H."/>
            <person name="Horiuchi T."/>
        </authorList>
    </citation>
    <scope>NUCLEOTIDE SEQUENCE [LARGE SCALE GENOMIC DNA]</scope>
    <source>
        <strain>K12 / W3110 / ATCC 27325 / DSM 5911</strain>
    </source>
</reference>
<reference key="5">
    <citation type="journal article" date="1988" name="J. Bacteriol.">
        <title>Characteristics of a ugp-encoded and phoB-dependent glycerophosphoryl diester phosphodiesterase which is physically dependent on the ugp transport system of Escherichia coli.</title>
        <authorList>
            <person name="Brzoska P."/>
            <person name="Boos W."/>
        </authorList>
    </citation>
    <scope>FUNCTION IN SN-GLYCEROL-3-PHOSPHATE AND GLYCEROPHOSPHORYL DIESTERS TRANSPORT</scope>
    <source>
        <strain>K12</strain>
    </source>
</reference>
<reference key="6">
    <citation type="journal article" date="1991" name="J. Bacteriol.">
        <title>Dual regulation of the ugp operon by phosphate and carbon starvation at two interspaced promoters.</title>
        <authorList>
            <person name="Kasahara M."/>
            <person name="Makino K."/>
            <person name="Amemura M."/>
            <person name="Nakata A."/>
            <person name="Shinagawa H."/>
        </authorList>
    </citation>
    <scope>TRANSCRIPTIONAL REGULATION BY PHOB AND CRP</scope>
    <source>
        <strain>K12</strain>
    </source>
</reference>
<reference key="7">
    <citation type="journal article" date="2009" name="J. Bacteriol.">
        <title>Uptake of glycerol-2-phosphate via the ugp-encoded transporter in Escherichia coli K-12.</title>
        <authorList>
            <person name="Yang K."/>
            <person name="Wang M."/>
            <person name="Metcalf W.W."/>
        </authorList>
    </citation>
    <scope>FUNCTION IN GLYCEROL-2-PHOSPHATE TRANSPORT</scope>
    <scope>DISRUPTION PHENOTYPE</scope>
</reference>
<reference evidence="12" key="8">
    <citation type="journal article" date="2012" name="Mol. Microbiol.">
        <title>Determinants of substrate specificity and biochemical properties of the sn-glycerol-3-phosphate ATP binding cassette transporter (UgpB-AEC2) of Escherichia coli.</title>
        <authorList>
            <person name="Wuttge S."/>
            <person name="Bommer M."/>
            <person name="Jaeger F."/>
            <person name="Martins B.M."/>
            <person name="Jacob S."/>
            <person name="Licht A."/>
            <person name="Scheffel F."/>
            <person name="Dobbek H."/>
            <person name="Schneider E."/>
        </authorList>
    </citation>
    <scope>X-RAY CRYSTALLOGRAPHY (1.80 ANGSTROMS) OF 24-438 IN COMPLEX WITH SN-GLYCEROL 3-PHOSPHATE</scope>
    <scope>FUNCTION</scope>
    <scope>SUBUNIT</scope>
    <scope>MUTAGENESIS OF TRP-192 AND TRP-195</scope>
</reference>
<reference evidence="13" key="9">
    <citation type="journal article" date="2020" name="EMBO J.">
        <title>A metabolite binding protein moonlights as a bile-responsive chaperone.</title>
        <authorList>
            <person name="Lee C."/>
            <person name="Betschinger P."/>
            <person name="Wu K."/>
            <person name="Zyla D.S."/>
            <person name="Glockshuber R."/>
            <person name="Bardwell J.C."/>
        </authorList>
    </citation>
    <scope>X-RAY CRYSTALLOGRAPHY (1.25 ANGSTROMS) OF 24-438 OF MUTANT SER-192/SER-195</scope>
    <scope>FUNCTION AS A CHAPERONE</scope>
    <scope>ACTIVITY REGULATION</scope>
    <scope>SUBCELLULAR LOCATION</scope>
    <scope>MUTAGENESIS OF GLU-89; TRP-192 AND ARG-397</scope>
    <source>
        <strain>K12</strain>
    </source>
</reference>